<organism>
    <name type="scientific">Hottentotta tamulus</name>
    <name type="common">Eastern Indian scorpion</name>
    <name type="synonym">Mesobuthus tamulus</name>
    <dbReference type="NCBI Taxonomy" id="34647"/>
    <lineage>
        <taxon>Eukaryota</taxon>
        <taxon>Metazoa</taxon>
        <taxon>Ecdysozoa</taxon>
        <taxon>Arthropoda</taxon>
        <taxon>Chelicerata</taxon>
        <taxon>Arachnida</taxon>
        <taxon>Scorpiones</taxon>
        <taxon>Buthida</taxon>
        <taxon>Buthoidea</taxon>
        <taxon>Buthidae</taxon>
        <taxon>Mesobuthus</taxon>
    </lineage>
</organism>
<reference key="1">
    <citation type="submission" date="1998-10" db="EMBL/GenBank/DDBJ databases">
        <title>Molecular cloning of potassium channel blocking toxin gene from Indian red scorpion, Mesobuthus tamulus.</title>
        <authorList>
            <person name="Jeyaseelan K."/>
            <person name="Armugam A."/>
            <person name="Shrestha R."/>
            <person name="Kini R.M."/>
            <person name="Strong P.N."/>
            <person name="Gopalakrishnakone P."/>
        </authorList>
    </citation>
    <scope>NUCLEOTIDE SEQUENCE [GENOMIC DNA]</scope>
</reference>
<dbReference type="EMBL" id="AF102776">
    <property type="protein sequence ID" value="AAC72985.1"/>
    <property type="molecule type" value="Genomic_DNA"/>
</dbReference>
<dbReference type="GO" id="GO:0005576">
    <property type="term" value="C:extracellular region"/>
    <property type="evidence" value="ECO:0007669"/>
    <property type="project" value="UniProtKB-SubCell"/>
</dbReference>
<dbReference type="GO" id="GO:0015459">
    <property type="term" value="F:potassium channel regulator activity"/>
    <property type="evidence" value="ECO:0007669"/>
    <property type="project" value="UniProtKB-KW"/>
</dbReference>
<dbReference type="GO" id="GO:0090729">
    <property type="term" value="F:toxin activity"/>
    <property type="evidence" value="ECO:0007669"/>
    <property type="project" value="UniProtKB-KW"/>
</dbReference>
<comment type="function">
    <text>Inhibits potassium channels.</text>
</comment>
<comment type="subcellular location">
    <subcellularLocation>
        <location evidence="1">Secreted</location>
    </subcellularLocation>
</comment>
<comment type="tissue specificity">
    <text>Expressed by the venom gland.</text>
</comment>
<name>SCK_HOTTA</name>
<evidence type="ECO:0000250" key="1"/>
<accession>O96669</accession>
<proteinExistence type="inferred from homology"/>
<protein>
    <recommendedName>
        <fullName>Putative potassium channel blocker</fullName>
    </recommendedName>
</protein>
<keyword id="KW-0872">Ion channel impairing toxin</keyword>
<keyword id="KW-0528">Neurotoxin</keyword>
<keyword id="KW-0632">Potassium channel impairing toxin</keyword>
<keyword id="KW-0964">Secreted</keyword>
<keyword id="KW-0800">Toxin</keyword>
<feature type="chain" id="PRO_0000066864" description="Putative potassium channel blocker">
    <location>
        <begin position="1" status="less than"/>
        <end position="45"/>
    </location>
</feature>
<feature type="non-terminal residue">
    <location>
        <position position="1"/>
    </location>
</feature>
<sequence>CQNECCGISSLRERNYCANLVCINCFCQGRTYKICRCFFSIHAIR</sequence>